<evidence type="ECO:0000255" key="1">
    <source>
        <dbReference type="HAMAP-Rule" id="MF_01274"/>
    </source>
</evidence>
<dbReference type="EC" id="2.7.1.33" evidence="1"/>
<dbReference type="EMBL" id="CU633749">
    <property type="protein sequence ID" value="CAP62751.1"/>
    <property type="molecule type" value="Genomic_DNA"/>
</dbReference>
<dbReference type="RefSeq" id="WP_012351420.1">
    <property type="nucleotide sequence ID" value="NC_010528.1"/>
</dbReference>
<dbReference type="SMR" id="B2AG52"/>
<dbReference type="GeneID" id="29762080"/>
<dbReference type="KEGG" id="cti:RALTA_A0078"/>
<dbReference type="eggNOG" id="COG1521">
    <property type="taxonomic scope" value="Bacteria"/>
</dbReference>
<dbReference type="HOGENOM" id="CLU_066627_0_0_4"/>
<dbReference type="BioCyc" id="CTAI977880:RALTA_RS00390-MONOMER"/>
<dbReference type="UniPathway" id="UPA00241">
    <property type="reaction ID" value="UER00352"/>
</dbReference>
<dbReference type="Proteomes" id="UP000001692">
    <property type="component" value="Chromosome 1"/>
</dbReference>
<dbReference type="GO" id="GO:0005737">
    <property type="term" value="C:cytoplasm"/>
    <property type="evidence" value="ECO:0007669"/>
    <property type="project" value="UniProtKB-SubCell"/>
</dbReference>
<dbReference type="GO" id="GO:0005524">
    <property type="term" value="F:ATP binding"/>
    <property type="evidence" value="ECO:0007669"/>
    <property type="project" value="UniProtKB-UniRule"/>
</dbReference>
<dbReference type="GO" id="GO:0004594">
    <property type="term" value="F:pantothenate kinase activity"/>
    <property type="evidence" value="ECO:0007669"/>
    <property type="project" value="UniProtKB-UniRule"/>
</dbReference>
<dbReference type="GO" id="GO:0015937">
    <property type="term" value="P:coenzyme A biosynthetic process"/>
    <property type="evidence" value="ECO:0007669"/>
    <property type="project" value="UniProtKB-UniRule"/>
</dbReference>
<dbReference type="CDD" id="cd24015">
    <property type="entry name" value="ASKHA_NBD_PanK-III"/>
    <property type="match status" value="1"/>
</dbReference>
<dbReference type="Gene3D" id="3.30.420.40">
    <property type="match status" value="2"/>
</dbReference>
<dbReference type="HAMAP" id="MF_01274">
    <property type="entry name" value="Pantothen_kinase_3"/>
    <property type="match status" value="1"/>
</dbReference>
<dbReference type="InterPro" id="IPR043129">
    <property type="entry name" value="ATPase_NBD"/>
</dbReference>
<dbReference type="InterPro" id="IPR004619">
    <property type="entry name" value="Type_III_PanK"/>
</dbReference>
<dbReference type="NCBIfam" id="TIGR00671">
    <property type="entry name" value="baf"/>
    <property type="match status" value="1"/>
</dbReference>
<dbReference type="NCBIfam" id="NF009867">
    <property type="entry name" value="PRK13328.1-3"/>
    <property type="match status" value="1"/>
</dbReference>
<dbReference type="PANTHER" id="PTHR34265">
    <property type="entry name" value="TYPE III PANTOTHENATE KINASE"/>
    <property type="match status" value="1"/>
</dbReference>
<dbReference type="PANTHER" id="PTHR34265:SF1">
    <property type="entry name" value="TYPE III PANTOTHENATE KINASE"/>
    <property type="match status" value="1"/>
</dbReference>
<dbReference type="Pfam" id="PF03309">
    <property type="entry name" value="Pan_kinase"/>
    <property type="match status" value="1"/>
</dbReference>
<dbReference type="SUPFAM" id="SSF53067">
    <property type="entry name" value="Actin-like ATPase domain"/>
    <property type="match status" value="2"/>
</dbReference>
<reference key="1">
    <citation type="journal article" date="2008" name="Genome Res.">
        <title>Genome sequence of the beta-rhizobium Cupriavidus taiwanensis and comparative genomics of rhizobia.</title>
        <authorList>
            <person name="Amadou C."/>
            <person name="Pascal G."/>
            <person name="Mangenot S."/>
            <person name="Glew M."/>
            <person name="Bontemps C."/>
            <person name="Capela D."/>
            <person name="Carrere S."/>
            <person name="Cruveiller S."/>
            <person name="Dossat C."/>
            <person name="Lajus A."/>
            <person name="Marchetti M."/>
            <person name="Poinsot V."/>
            <person name="Rouy Z."/>
            <person name="Servin B."/>
            <person name="Saad M."/>
            <person name="Schenowitz C."/>
            <person name="Barbe V."/>
            <person name="Batut J."/>
            <person name="Medigue C."/>
            <person name="Masson-Boivin C."/>
        </authorList>
    </citation>
    <scope>NUCLEOTIDE SEQUENCE [LARGE SCALE GENOMIC DNA]</scope>
    <source>
        <strain>DSM 17343 / BCRC 17206 / CCUG 44338 / CIP 107171 / LMG 19424 / R1</strain>
    </source>
</reference>
<proteinExistence type="inferred from homology"/>
<name>COAX_CUPTR</name>
<comment type="function">
    <text evidence="1">Catalyzes the phosphorylation of pantothenate (Pan), the first step in CoA biosynthesis.</text>
</comment>
<comment type="catalytic activity">
    <reaction evidence="1">
        <text>(R)-pantothenate + ATP = (R)-4'-phosphopantothenate + ADP + H(+)</text>
        <dbReference type="Rhea" id="RHEA:16373"/>
        <dbReference type="ChEBI" id="CHEBI:10986"/>
        <dbReference type="ChEBI" id="CHEBI:15378"/>
        <dbReference type="ChEBI" id="CHEBI:29032"/>
        <dbReference type="ChEBI" id="CHEBI:30616"/>
        <dbReference type="ChEBI" id="CHEBI:456216"/>
        <dbReference type="EC" id="2.7.1.33"/>
    </reaction>
</comment>
<comment type="cofactor">
    <cofactor evidence="1">
        <name>NH4(+)</name>
        <dbReference type="ChEBI" id="CHEBI:28938"/>
    </cofactor>
    <cofactor evidence="1">
        <name>K(+)</name>
        <dbReference type="ChEBI" id="CHEBI:29103"/>
    </cofactor>
    <text evidence="1">A monovalent cation. Ammonium or potassium.</text>
</comment>
<comment type="pathway">
    <text evidence="1">Cofactor biosynthesis; coenzyme A biosynthesis; CoA from (R)-pantothenate: step 1/5.</text>
</comment>
<comment type="subunit">
    <text evidence="1">Homodimer.</text>
</comment>
<comment type="subcellular location">
    <subcellularLocation>
        <location evidence="1">Cytoplasm</location>
    </subcellularLocation>
</comment>
<comment type="similarity">
    <text evidence="1">Belongs to the type III pantothenate kinase family.</text>
</comment>
<accession>B2AG52</accession>
<sequence length="283" mass="28843">MNAPRLLVDIGNTRLKWAWCEAGAPLPASTGTTVLPTPWQHAGAVAHAADGALRTLAAELRALRAGGPMPSVWISNVAGPVIAAAVDAALADAFGGCAPVQWVRSAAAHGDLVNGYREPTQLGVDRWVGAVGAHRWLPRDTLLVVTAGTATTLDIVTVAAEGGARFEGGLILPGLALMLGTLARNTAQLPALDVGEAGSVAGAQRRWADNTHDAIAAGCLAAQAGAIERTWRALGERGDAARPPRCLLSGGARGALAGALAVPFEMHDNLVLLGLHAMAMADA</sequence>
<gene>
    <name evidence="1" type="primary">coaX</name>
    <name type="ordered locus">RALTA_A0078</name>
</gene>
<keyword id="KW-0067">ATP-binding</keyword>
<keyword id="KW-0173">Coenzyme A biosynthesis</keyword>
<keyword id="KW-0963">Cytoplasm</keyword>
<keyword id="KW-0418">Kinase</keyword>
<keyword id="KW-0547">Nucleotide-binding</keyword>
<keyword id="KW-0630">Potassium</keyword>
<keyword id="KW-0808">Transferase</keyword>
<organism>
    <name type="scientific">Cupriavidus taiwanensis (strain DSM 17343 / BCRC 17206 / CCUG 44338 / CIP 107171 / LMG 19424 / R1)</name>
    <name type="common">Ralstonia taiwanensis (strain LMG 19424)</name>
    <dbReference type="NCBI Taxonomy" id="977880"/>
    <lineage>
        <taxon>Bacteria</taxon>
        <taxon>Pseudomonadati</taxon>
        <taxon>Pseudomonadota</taxon>
        <taxon>Betaproteobacteria</taxon>
        <taxon>Burkholderiales</taxon>
        <taxon>Burkholderiaceae</taxon>
        <taxon>Cupriavidus</taxon>
    </lineage>
</organism>
<protein>
    <recommendedName>
        <fullName evidence="1">Type III pantothenate kinase</fullName>
        <ecNumber evidence="1">2.7.1.33</ecNumber>
    </recommendedName>
    <alternativeName>
        <fullName evidence="1">PanK-III</fullName>
    </alternativeName>
    <alternativeName>
        <fullName evidence="1">Pantothenic acid kinase</fullName>
    </alternativeName>
</protein>
<feature type="chain" id="PRO_1000140237" description="Type III pantothenate kinase">
    <location>
        <begin position="1"/>
        <end position="283"/>
    </location>
</feature>
<feature type="active site" description="Proton acceptor" evidence="1">
    <location>
        <position position="125"/>
    </location>
</feature>
<feature type="binding site" evidence="1">
    <location>
        <begin position="9"/>
        <end position="16"/>
    </location>
    <ligand>
        <name>ATP</name>
        <dbReference type="ChEBI" id="CHEBI:30616"/>
    </ligand>
</feature>
<feature type="binding site" evidence="1">
    <location>
        <position position="116"/>
    </location>
    <ligand>
        <name>substrate</name>
    </ligand>
</feature>
<feature type="binding site" evidence="1">
    <location>
        <begin position="123"/>
        <end position="126"/>
    </location>
    <ligand>
        <name>substrate</name>
    </ligand>
</feature>
<feature type="binding site" evidence="1">
    <location>
        <position position="149"/>
    </location>
    <ligand>
        <name>ATP</name>
        <dbReference type="ChEBI" id="CHEBI:30616"/>
    </ligand>
</feature>
<feature type="binding site" evidence="1">
    <location>
        <position position="211"/>
    </location>
    <ligand>
        <name>substrate</name>
    </ligand>
</feature>